<reference key="1">
    <citation type="journal article" date="2005" name="Science">
        <title>The transcriptional landscape of the mammalian genome.</title>
        <authorList>
            <person name="Carninci P."/>
            <person name="Kasukawa T."/>
            <person name="Katayama S."/>
            <person name="Gough J."/>
            <person name="Frith M.C."/>
            <person name="Maeda N."/>
            <person name="Oyama R."/>
            <person name="Ravasi T."/>
            <person name="Lenhard B."/>
            <person name="Wells C."/>
            <person name="Kodzius R."/>
            <person name="Shimokawa K."/>
            <person name="Bajic V.B."/>
            <person name="Brenner S.E."/>
            <person name="Batalov S."/>
            <person name="Forrest A.R."/>
            <person name="Zavolan M."/>
            <person name="Davis M.J."/>
            <person name="Wilming L.G."/>
            <person name="Aidinis V."/>
            <person name="Allen J.E."/>
            <person name="Ambesi-Impiombato A."/>
            <person name="Apweiler R."/>
            <person name="Aturaliya R.N."/>
            <person name="Bailey T.L."/>
            <person name="Bansal M."/>
            <person name="Baxter L."/>
            <person name="Beisel K.W."/>
            <person name="Bersano T."/>
            <person name="Bono H."/>
            <person name="Chalk A.M."/>
            <person name="Chiu K.P."/>
            <person name="Choudhary V."/>
            <person name="Christoffels A."/>
            <person name="Clutterbuck D.R."/>
            <person name="Crowe M.L."/>
            <person name="Dalla E."/>
            <person name="Dalrymple B.P."/>
            <person name="de Bono B."/>
            <person name="Della Gatta G."/>
            <person name="di Bernardo D."/>
            <person name="Down T."/>
            <person name="Engstrom P."/>
            <person name="Fagiolini M."/>
            <person name="Faulkner G."/>
            <person name="Fletcher C.F."/>
            <person name="Fukushima T."/>
            <person name="Furuno M."/>
            <person name="Futaki S."/>
            <person name="Gariboldi M."/>
            <person name="Georgii-Hemming P."/>
            <person name="Gingeras T.R."/>
            <person name="Gojobori T."/>
            <person name="Green R.E."/>
            <person name="Gustincich S."/>
            <person name="Harbers M."/>
            <person name="Hayashi Y."/>
            <person name="Hensch T.K."/>
            <person name="Hirokawa N."/>
            <person name="Hill D."/>
            <person name="Huminiecki L."/>
            <person name="Iacono M."/>
            <person name="Ikeo K."/>
            <person name="Iwama A."/>
            <person name="Ishikawa T."/>
            <person name="Jakt M."/>
            <person name="Kanapin A."/>
            <person name="Katoh M."/>
            <person name="Kawasawa Y."/>
            <person name="Kelso J."/>
            <person name="Kitamura H."/>
            <person name="Kitano H."/>
            <person name="Kollias G."/>
            <person name="Krishnan S.P."/>
            <person name="Kruger A."/>
            <person name="Kummerfeld S.K."/>
            <person name="Kurochkin I.V."/>
            <person name="Lareau L.F."/>
            <person name="Lazarevic D."/>
            <person name="Lipovich L."/>
            <person name="Liu J."/>
            <person name="Liuni S."/>
            <person name="McWilliam S."/>
            <person name="Madan Babu M."/>
            <person name="Madera M."/>
            <person name="Marchionni L."/>
            <person name="Matsuda H."/>
            <person name="Matsuzawa S."/>
            <person name="Miki H."/>
            <person name="Mignone F."/>
            <person name="Miyake S."/>
            <person name="Morris K."/>
            <person name="Mottagui-Tabar S."/>
            <person name="Mulder N."/>
            <person name="Nakano N."/>
            <person name="Nakauchi H."/>
            <person name="Ng P."/>
            <person name="Nilsson R."/>
            <person name="Nishiguchi S."/>
            <person name="Nishikawa S."/>
            <person name="Nori F."/>
            <person name="Ohara O."/>
            <person name="Okazaki Y."/>
            <person name="Orlando V."/>
            <person name="Pang K.C."/>
            <person name="Pavan W.J."/>
            <person name="Pavesi G."/>
            <person name="Pesole G."/>
            <person name="Petrovsky N."/>
            <person name="Piazza S."/>
            <person name="Reed J."/>
            <person name="Reid J.F."/>
            <person name="Ring B.Z."/>
            <person name="Ringwald M."/>
            <person name="Rost B."/>
            <person name="Ruan Y."/>
            <person name="Salzberg S.L."/>
            <person name="Sandelin A."/>
            <person name="Schneider C."/>
            <person name="Schoenbach C."/>
            <person name="Sekiguchi K."/>
            <person name="Semple C.A."/>
            <person name="Seno S."/>
            <person name="Sessa L."/>
            <person name="Sheng Y."/>
            <person name="Shibata Y."/>
            <person name="Shimada H."/>
            <person name="Shimada K."/>
            <person name="Silva D."/>
            <person name="Sinclair B."/>
            <person name="Sperling S."/>
            <person name="Stupka E."/>
            <person name="Sugiura K."/>
            <person name="Sultana R."/>
            <person name="Takenaka Y."/>
            <person name="Taki K."/>
            <person name="Tammoja K."/>
            <person name="Tan S.L."/>
            <person name="Tang S."/>
            <person name="Taylor M.S."/>
            <person name="Tegner J."/>
            <person name="Teichmann S.A."/>
            <person name="Ueda H.R."/>
            <person name="van Nimwegen E."/>
            <person name="Verardo R."/>
            <person name="Wei C.L."/>
            <person name="Yagi K."/>
            <person name="Yamanishi H."/>
            <person name="Zabarovsky E."/>
            <person name="Zhu S."/>
            <person name="Zimmer A."/>
            <person name="Hide W."/>
            <person name="Bult C."/>
            <person name="Grimmond S.M."/>
            <person name="Teasdale R.D."/>
            <person name="Liu E.T."/>
            <person name="Brusic V."/>
            <person name="Quackenbush J."/>
            <person name="Wahlestedt C."/>
            <person name="Mattick J.S."/>
            <person name="Hume D.A."/>
            <person name="Kai C."/>
            <person name="Sasaki D."/>
            <person name="Tomaru Y."/>
            <person name="Fukuda S."/>
            <person name="Kanamori-Katayama M."/>
            <person name="Suzuki M."/>
            <person name="Aoki J."/>
            <person name="Arakawa T."/>
            <person name="Iida J."/>
            <person name="Imamura K."/>
            <person name="Itoh M."/>
            <person name="Kato T."/>
            <person name="Kawaji H."/>
            <person name="Kawagashira N."/>
            <person name="Kawashima T."/>
            <person name="Kojima M."/>
            <person name="Kondo S."/>
            <person name="Konno H."/>
            <person name="Nakano K."/>
            <person name="Ninomiya N."/>
            <person name="Nishio T."/>
            <person name="Okada M."/>
            <person name="Plessy C."/>
            <person name="Shibata K."/>
            <person name="Shiraki T."/>
            <person name="Suzuki S."/>
            <person name="Tagami M."/>
            <person name="Waki K."/>
            <person name="Watahiki A."/>
            <person name="Okamura-Oho Y."/>
            <person name="Suzuki H."/>
            <person name="Kawai J."/>
            <person name="Hayashizaki Y."/>
        </authorList>
    </citation>
    <scope>NUCLEOTIDE SEQUENCE [LARGE SCALE MRNA]</scope>
</reference>
<reference key="2">
    <citation type="submission" date="2005-02" db="EMBL/GenBank/DDBJ databases">
        <title>Prediction of the coding sequences of mouse homologues of KIAA gene. The complete nucleotide sequences of mouse KIAA-homologous cDNAs identified by screening of terminal sequences of cDNA clones randomly sampled from size-fractionated libraries.</title>
        <authorList>
            <person name="Okazaki N."/>
            <person name="Kikuno R.F."/>
            <person name="Ohara R."/>
            <person name="Inamoto S."/>
            <person name="Nagase T."/>
            <person name="Ohara O."/>
            <person name="Koga H."/>
        </authorList>
    </citation>
    <scope>NUCLEOTIDE SEQUENCE [LARGE SCALE MRNA]</scope>
    <source>
        <tissue>Fetal brain</tissue>
    </source>
</reference>
<reference key="3">
    <citation type="submission" date="2005-07" db="EMBL/GenBank/DDBJ databases">
        <authorList>
            <person name="Mural R.J."/>
            <person name="Adams M.D."/>
            <person name="Myers E.W."/>
            <person name="Smith H.O."/>
            <person name="Venter J.C."/>
        </authorList>
    </citation>
    <scope>NUCLEOTIDE SEQUENCE [LARGE SCALE GENOMIC DNA]</scope>
</reference>
<reference key="4">
    <citation type="journal article" date="2010" name="Cell">
        <title>A tissue-specific atlas of mouse protein phosphorylation and expression.</title>
        <authorList>
            <person name="Huttlin E.L."/>
            <person name="Jedrychowski M.P."/>
            <person name="Elias J.E."/>
            <person name="Goswami T."/>
            <person name="Rad R."/>
            <person name="Beausoleil S.A."/>
            <person name="Villen J."/>
            <person name="Haas W."/>
            <person name="Sowa M.E."/>
            <person name="Gygi S.P."/>
        </authorList>
    </citation>
    <scope>IDENTIFICATION BY MASS SPECTROMETRY [LARGE SCALE ANALYSIS]</scope>
    <source>
        <tissue>Testis</tissue>
    </source>
</reference>
<gene>
    <name type="primary">Map10</name>
    <name type="synonym">Kiaa1383</name>
</gene>
<keyword id="KW-0131">Cell cycle</keyword>
<keyword id="KW-0132">Cell division</keyword>
<keyword id="KW-0963">Cytoplasm</keyword>
<keyword id="KW-0206">Cytoskeleton</keyword>
<keyword id="KW-1185">Reference proteome</keyword>
<feature type="chain" id="PRO_0000403447" description="Microtubule-associated protein 10">
    <location>
        <begin position="1"/>
        <end position="891"/>
    </location>
</feature>
<feature type="region of interest" description="Disordered" evidence="2">
    <location>
        <begin position="325"/>
        <end position="355"/>
    </location>
</feature>
<feature type="region of interest" description="Disordered" evidence="2">
    <location>
        <begin position="401"/>
        <end position="457"/>
    </location>
</feature>
<feature type="region of interest" description="Disordered" evidence="2">
    <location>
        <begin position="504"/>
        <end position="679"/>
    </location>
</feature>
<feature type="region of interest" description="Disordered" evidence="2">
    <location>
        <begin position="702"/>
        <end position="844"/>
    </location>
</feature>
<feature type="compositionally biased region" description="Low complexity" evidence="2">
    <location>
        <begin position="407"/>
        <end position="417"/>
    </location>
</feature>
<feature type="compositionally biased region" description="Polar residues" evidence="2">
    <location>
        <begin position="509"/>
        <end position="520"/>
    </location>
</feature>
<feature type="compositionally biased region" description="Polar residues" evidence="2">
    <location>
        <begin position="527"/>
        <end position="544"/>
    </location>
</feature>
<feature type="compositionally biased region" description="Basic and acidic residues" evidence="2">
    <location>
        <begin position="577"/>
        <end position="592"/>
    </location>
</feature>
<feature type="compositionally biased region" description="Basic and acidic residues" evidence="2">
    <location>
        <begin position="645"/>
        <end position="658"/>
    </location>
</feature>
<feature type="compositionally biased region" description="Polar residues" evidence="2">
    <location>
        <begin position="665"/>
        <end position="679"/>
    </location>
</feature>
<feature type="compositionally biased region" description="Polar residues" evidence="2">
    <location>
        <begin position="702"/>
        <end position="718"/>
    </location>
</feature>
<feature type="compositionally biased region" description="Polar residues" evidence="2">
    <location>
        <begin position="726"/>
        <end position="749"/>
    </location>
</feature>
<feature type="compositionally biased region" description="Polar residues" evidence="2">
    <location>
        <begin position="776"/>
        <end position="790"/>
    </location>
</feature>
<feature type="compositionally biased region" description="Polar residues" evidence="2">
    <location>
        <begin position="826"/>
        <end position="844"/>
    </location>
</feature>
<feature type="sequence conflict" description="In Ref. 2; BAD90253." evidence="3" ref="2">
    <original>K</original>
    <variation>R</variation>
    <location>
        <position position="250"/>
    </location>
</feature>
<feature type="sequence conflict" description="In Ref. 2; BAD90253." evidence="3" ref="2">
    <original>K</original>
    <variation>R</variation>
    <location>
        <position position="453"/>
    </location>
</feature>
<feature type="sequence conflict" description="In Ref. 2; BAD90253." evidence="3" ref="2">
    <original>R</original>
    <variation>S</variation>
    <location>
        <position position="570"/>
    </location>
</feature>
<feature type="sequence conflict" description="In Ref. 2; BAD90253." evidence="3" ref="2">
    <original>M</original>
    <variation>L</variation>
    <location>
        <position position="588"/>
    </location>
</feature>
<feature type="sequence conflict" description="In Ref. 2; BAD90253." evidence="3" ref="2">
    <original>S</original>
    <variation>A</variation>
    <location>
        <position position="745"/>
    </location>
</feature>
<feature type="sequence conflict" description="In Ref. 2; BAD90253." evidence="3" ref="2">
    <original>I</original>
    <variation>N</variation>
    <location>
        <position position="883"/>
    </location>
</feature>
<sequence>MATTAAGRLFSLELLVDWVRLETGLSPCAASPAVAFRLLDFPPLLVFPPAAPGPEPQRGAISFGRGKACLLRLHPAALRRPRLRAALLQLPVGPTSAPGLVGACDILLVPSLGQRGVFALRGPEAERVGELALFYRLTELGRFSPGVPQLRGPLSPACILDSEALEVSEPRTEETSKPCTKGISARCLQCVSNARLLEGSEPCAKDTNSWSAGDSDASVVQKSWEEAVLHSKASSGDMASAPCSPAPSGKTVSSVSQDVTELDFETNTFCPPPLYYTHLTQEKTPSARVEITIEPQRNEPEDLDDIFPETKLVSPPLRPVKHTRAAVQESPPVLPNLPQTQGPGEANEAPCPPQIEQSPVNAIRQLPLLNALLIELSLLCNQPVASPTQVHPHLAWLYRGEDKGPDPSTKSTSPSESKSNKLSVRENEKLVNPQSKKNPKGKHPKIGGSPPPKVTKGRLLYGLTNTLRLRLQQTNPNMLVVHEKREQYRRSQIQAVGPKLRIPSWKGKVSSSAAESQMSPQLPADTPTDSNGKLPSLAVQSQLPPQLPGDESLDSIGSFEEGSDTSMQIRAGFDESSTTKEVKQSHAMKQEMVDQSENRTIVTALRAPVSPAGSVTPERSLRSNSFGGNWKNKVPSPGLSLQEPTVDKTVDEGKDGRQVKAISAADTSENRPTSRKSSCESISELLYRDGFTSPCYSEDFCTTENNSRSLPAPDSSTGVEHVQKGSRASKSSEARLSTRKNSSDSSSVLTPPFSAGSPVCSHKRSRALKIHDSLEEASSLSTSDFSSQWTNEKENQADPGSSKVMRKGRDSSTKLKVRAGHKSSEKSQSPRTSQVSSYEPSNLSELELKAIDDSDLADFQEEEDGLGSLRISRQCKDICELVINKLPGYTV</sequence>
<organism>
    <name type="scientific">Mus musculus</name>
    <name type="common">Mouse</name>
    <dbReference type="NCBI Taxonomy" id="10090"/>
    <lineage>
        <taxon>Eukaryota</taxon>
        <taxon>Metazoa</taxon>
        <taxon>Chordata</taxon>
        <taxon>Craniata</taxon>
        <taxon>Vertebrata</taxon>
        <taxon>Euteleostomi</taxon>
        <taxon>Mammalia</taxon>
        <taxon>Eutheria</taxon>
        <taxon>Euarchontoglires</taxon>
        <taxon>Glires</taxon>
        <taxon>Rodentia</taxon>
        <taxon>Myomorpha</taxon>
        <taxon>Muroidea</taxon>
        <taxon>Muridae</taxon>
        <taxon>Murinae</taxon>
        <taxon>Mus</taxon>
        <taxon>Mus</taxon>
    </lineage>
</organism>
<evidence type="ECO:0000250" key="1"/>
<evidence type="ECO:0000256" key="2">
    <source>
        <dbReference type="SAM" id="MobiDB-lite"/>
    </source>
</evidence>
<evidence type="ECO:0000305" key="3"/>
<proteinExistence type="evidence at protein level"/>
<name>MAP10_MOUSE</name>
<accession>Q8BJS7</accession>
<accession>Q5DTY2</accession>
<protein>
    <recommendedName>
        <fullName>Microtubule-associated protein 10</fullName>
    </recommendedName>
    <alternativeName>
        <fullName>Microtubule regulator of 120 KDa</fullName>
    </alternativeName>
</protein>
<dbReference type="EMBL" id="AK080043">
    <property type="protein sequence ID" value="BAC37814.1"/>
    <property type="molecule type" value="mRNA"/>
</dbReference>
<dbReference type="EMBL" id="AK220388">
    <property type="protein sequence ID" value="BAD90253.1"/>
    <property type="molecule type" value="mRNA"/>
</dbReference>
<dbReference type="EMBL" id="CH466525">
    <property type="protein sequence ID" value="EDL11801.1"/>
    <property type="molecule type" value="Genomic_DNA"/>
</dbReference>
<dbReference type="CCDS" id="CCDS22780.1"/>
<dbReference type="RefSeq" id="NP_083184.1">
    <property type="nucleotide sequence ID" value="NM_028908.3"/>
</dbReference>
<dbReference type="FunCoup" id="Q8BJS7">
    <property type="interactions" value="41"/>
</dbReference>
<dbReference type="STRING" id="10090.ENSMUSP00000061679"/>
<dbReference type="GlyGen" id="Q8BJS7">
    <property type="glycosylation" value="4 sites, 2 N-linked glycans (2 sites), 1 O-linked glycan (1 site)"/>
</dbReference>
<dbReference type="iPTMnet" id="Q8BJS7"/>
<dbReference type="PhosphoSitePlus" id="Q8BJS7"/>
<dbReference type="SwissPalm" id="Q8BJS7"/>
<dbReference type="jPOST" id="Q8BJS7"/>
<dbReference type="PaxDb" id="10090-ENSMUSP00000061679"/>
<dbReference type="ProteomicsDB" id="295815"/>
<dbReference type="Antibodypedia" id="64568">
    <property type="antibodies" value="30 antibodies from 8 providers"/>
</dbReference>
<dbReference type="Ensembl" id="ENSMUST00000053078.5">
    <property type="protein sequence ID" value="ENSMUSP00000061679.4"/>
    <property type="gene ID" value="ENSMUSG00000050930.6"/>
</dbReference>
<dbReference type="GeneID" id="74393"/>
<dbReference type="KEGG" id="mmu:74393"/>
<dbReference type="UCSC" id="uc009nyi.2">
    <property type="organism name" value="mouse"/>
</dbReference>
<dbReference type="AGR" id="MGI:1921643"/>
<dbReference type="CTD" id="54627"/>
<dbReference type="MGI" id="MGI:1921643">
    <property type="gene designation" value="Map10"/>
</dbReference>
<dbReference type="VEuPathDB" id="HostDB:ENSMUSG00000050930"/>
<dbReference type="eggNOG" id="ENOG502QVBX">
    <property type="taxonomic scope" value="Eukaryota"/>
</dbReference>
<dbReference type="GeneTree" id="ENSGT00390000008459"/>
<dbReference type="HOGENOM" id="CLU_014844_0_0_1"/>
<dbReference type="InParanoid" id="Q8BJS7"/>
<dbReference type="OMA" id="EDFCTTE"/>
<dbReference type="OrthoDB" id="69809at2759"/>
<dbReference type="PhylomeDB" id="Q8BJS7"/>
<dbReference type="TreeFam" id="TF338644"/>
<dbReference type="BioGRID-ORCS" id="74393">
    <property type="hits" value="1 hit in 77 CRISPR screens"/>
</dbReference>
<dbReference type="PRO" id="PR:Q8BJS7"/>
<dbReference type="Proteomes" id="UP000000589">
    <property type="component" value="Chromosome 8"/>
</dbReference>
<dbReference type="RNAct" id="Q8BJS7">
    <property type="molecule type" value="protein"/>
</dbReference>
<dbReference type="Bgee" id="ENSMUSG00000050930">
    <property type="expression patterns" value="Expressed in spermatocyte and 177 other cell types or tissues"/>
</dbReference>
<dbReference type="GO" id="GO:0005813">
    <property type="term" value="C:centrosome"/>
    <property type="evidence" value="ECO:0000250"/>
    <property type="project" value="UniProtKB"/>
</dbReference>
<dbReference type="GO" id="GO:0005881">
    <property type="term" value="C:cytoplasmic microtubule"/>
    <property type="evidence" value="ECO:0000250"/>
    <property type="project" value="UniProtKB"/>
</dbReference>
<dbReference type="GO" id="GO:0030496">
    <property type="term" value="C:midbody"/>
    <property type="evidence" value="ECO:0000250"/>
    <property type="project" value="UniProtKB"/>
</dbReference>
<dbReference type="GO" id="GO:1990023">
    <property type="term" value="C:mitotic spindle midzone"/>
    <property type="evidence" value="ECO:0000250"/>
    <property type="project" value="UniProtKB"/>
</dbReference>
<dbReference type="GO" id="GO:0097431">
    <property type="term" value="C:mitotic spindle pole"/>
    <property type="evidence" value="ECO:0000250"/>
    <property type="project" value="UniProtKB"/>
</dbReference>
<dbReference type="GO" id="GO:0008017">
    <property type="term" value="F:microtubule binding"/>
    <property type="evidence" value="ECO:0000250"/>
    <property type="project" value="UniProtKB"/>
</dbReference>
<dbReference type="GO" id="GO:0051301">
    <property type="term" value="P:cell division"/>
    <property type="evidence" value="ECO:0007669"/>
    <property type="project" value="UniProtKB-KW"/>
</dbReference>
<dbReference type="GO" id="GO:0031122">
    <property type="term" value="P:cytoplasmic microtubule organization"/>
    <property type="evidence" value="ECO:0000250"/>
    <property type="project" value="UniProtKB"/>
</dbReference>
<dbReference type="GO" id="GO:0051256">
    <property type="term" value="P:mitotic spindle midzone assembly"/>
    <property type="evidence" value="ECO:0000250"/>
    <property type="project" value="UniProtKB"/>
</dbReference>
<dbReference type="GO" id="GO:0032467">
    <property type="term" value="P:positive regulation of cytokinesis"/>
    <property type="evidence" value="ECO:0000250"/>
    <property type="project" value="UniProtKB"/>
</dbReference>
<dbReference type="GO" id="GO:0032886">
    <property type="term" value="P:regulation of microtubule-based process"/>
    <property type="evidence" value="ECO:0000250"/>
    <property type="project" value="UniProtKB"/>
</dbReference>
<dbReference type="InterPro" id="IPR039302">
    <property type="entry name" value="MAP10"/>
</dbReference>
<dbReference type="InterPro" id="IPR026679">
    <property type="entry name" value="MAP10_C-term"/>
</dbReference>
<dbReference type="PANTHER" id="PTHR21831">
    <property type="entry name" value="MICROTUBULE-ASSOCIATED PROTEIN 10"/>
    <property type="match status" value="1"/>
</dbReference>
<dbReference type="PANTHER" id="PTHR21831:SF2">
    <property type="entry name" value="MICROTUBULE-ASSOCIATED PROTEIN 10"/>
    <property type="match status" value="1"/>
</dbReference>
<dbReference type="Pfam" id="PF14925">
    <property type="entry name" value="HPHLAWLY"/>
    <property type="match status" value="2"/>
</dbReference>
<dbReference type="Pfam" id="PF14924">
    <property type="entry name" value="MAP10_N"/>
    <property type="match status" value="1"/>
</dbReference>
<comment type="function">
    <text evidence="1">Microtubule-associated protein (MAP) that plays a role in the regulation of cell division; promotes microtubule stability and participates in the organization of the spindle midzone and normal progress of cytokinesis.</text>
</comment>
<comment type="subunit">
    <text evidence="1">Interacts (via middle region) with microtubules.</text>
</comment>
<comment type="subcellular location">
    <subcellularLocation>
        <location evidence="1">Cytoplasm</location>
        <location evidence="1">Cytoskeleton</location>
    </subcellularLocation>
    <subcellularLocation>
        <location evidence="1">Cytoplasm</location>
        <location evidence="1">Cytoskeleton</location>
        <location evidence="1">Spindle pole</location>
    </subcellularLocation>
    <subcellularLocation>
        <location evidence="1">Cytoplasm</location>
        <location evidence="1">Cytoskeleton</location>
        <location evidence="1">Microtubule organizing center</location>
        <location evidence="1">Centrosome</location>
    </subcellularLocation>
    <subcellularLocation>
        <location evidence="1">Midbody</location>
    </subcellularLocation>
    <text evidence="1">Localized at stabilized microtubules (MTs) during interphase and to the mitotic apparatus during mitosis. Localized at spindle poles in metaphase and spindle midzone during telophase. Colocalized with Polo-like kinase PLK1 to the center of spindle midzone. Localized at the midbody during cytokinesis. Colocalized with acetylated-tubulin at MTs (By similarity).</text>
</comment>